<proteinExistence type="inferred from homology"/>
<organism>
    <name type="scientific">Salmonella gallinarum (strain 287/91 / NCTC 13346)</name>
    <dbReference type="NCBI Taxonomy" id="550538"/>
    <lineage>
        <taxon>Bacteria</taxon>
        <taxon>Pseudomonadati</taxon>
        <taxon>Pseudomonadota</taxon>
        <taxon>Gammaproteobacteria</taxon>
        <taxon>Enterobacterales</taxon>
        <taxon>Enterobacteriaceae</taxon>
        <taxon>Salmonella</taxon>
    </lineage>
</organism>
<reference key="1">
    <citation type="journal article" date="2008" name="Genome Res.">
        <title>Comparative genome analysis of Salmonella enteritidis PT4 and Salmonella gallinarum 287/91 provides insights into evolutionary and host adaptation pathways.</title>
        <authorList>
            <person name="Thomson N.R."/>
            <person name="Clayton D.J."/>
            <person name="Windhorst D."/>
            <person name="Vernikos G."/>
            <person name="Davidson S."/>
            <person name="Churcher C."/>
            <person name="Quail M.A."/>
            <person name="Stevens M."/>
            <person name="Jones M.A."/>
            <person name="Watson M."/>
            <person name="Barron A."/>
            <person name="Layton A."/>
            <person name="Pickard D."/>
            <person name="Kingsley R.A."/>
            <person name="Bignell A."/>
            <person name="Clark L."/>
            <person name="Harris B."/>
            <person name="Ormond D."/>
            <person name="Abdellah Z."/>
            <person name="Brooks K."/>
            <person name="Cherevach I."/>
            <person name="Chillingworth T."/>
            <person name="Woodward J."/>
            <person name="Norberczak H."/>
            <person name="Lord A."/>
            <person name="Arrowsmith C."/>
            <person name="Jagels K."/>
            <person name="Moule S."/>
            <person name="Mungall K."/>
            <person name="Saunders M."/>
            <person name="Whitehead S."/>
            <person name="Chabalgoity J.A."/>
            <person name="Maskell D."/>
            <person name="Humphreys T."/>
            <person name="Roberts M."/>
            <person name="Barrow P.A."/>
            <person name="Dougan G."/>
            <person name="Parkhill J."/>
        </authorList>
    </citation>
    <scope>NUCLEOTIDE SEQUENCE [LARGE SCALE GENOMIC DNA]</scope>
    <source>
        <strain>287/91 / NCTC 13346</strain>
    </source>
</reference>
<gene>
    <name evidence="1" type="primary">rapZ</name>
    <name type="ordered locus">SG3213</name>
</gene>
<accession>B5RES1</accession>
<protein>
    <recommendedName>
        <fullName evidence="1">RNase adapter protein RapZ</fullName>
    </recommendedName>
</protein>
<sequence>MVLMIVSGRSGSGKSVALRALEDMGFYCVDNLPVVLLPDLARTLADRQISAAVSIDVRNMPESPEIFEQAMNNLPGAFSPQLLFLDADRNTLIRRYSDTRRLHPLSSKNLSLESAIDKESDLLEPLRSRADLIVDTSEMSVHELAEMLRTRLLGKRERELTMVFESFGFKHGIPIDADYVFDVRFLPNPHWDPKLRPMTGLDKPVAAFLDRHTEVHNFIYQTRSYLELWLPMLETNNRSYLTVAIGCTGGKHRSVYIAEQLADYFRSRGKNVQSRHRTLEKRKT</sequence>
<feature type="chain" id="PRO_1000130778" description="RNase adapter protein RapZ">
    <location>
        <begin position="1"/>
        <end position="284"/>
    </location>
</feature>
<feature type="region of interest" description="RNA-binding" evidence="1">
    <location>
        <begin position="266"/>
        <end position="284"/>
    </location>
</feature>
<feature type="binding site" evidence="1">
    <location>
        <begin position="8"/>
        <end position="15"/>
    </location>
    <ligand>
        <name>ATP</name>
        <dbReference type="ChEBI" id="CHEBI:30616"/>
    </ligand>
</feature>
<feature type="binding site" evidence="1">
    <location>
        <begin position="56"/>
        <end position="59"/>
    </location>
    <ligand>
        <name>GTP</name>
        <dbReference type="ChEBI" id="CHEBI:37565"/>
    </ligand>
</feature>
<name>RAPZ_SALG2</name>
<keyword id="KW-0067">ATP-binding</keyword>
<keyword id="KW-0342">GTP-binding</keyword>
<keyword id="KW-0547">Nucleotide-binding</keyword>
<keyword id="KW-0694">RNA-binding</keyword>
<evidence type="ECO:0000255" key="1">
    <source>
        <dbReference type="HAMAP-Rule" id="MF_00636"/>
    </source>
</evidence>
<comment type="function">
    <text evidence="1">Modulates the synthesis of GlmS, by affecting the processing and stability of the regulatory small RNA GlmZ. When glucosamine-6-phosphate (GlcN6P) concentrations are high in the cell, RapZ binds GlmZ and targets it to cleavage by RNase E. Consequently, GlmZ is inactivated and unable to activate GlmS synthesis. Under low GlcN6P concentrations, RapZ is sequestered and inactivated by an other regulatory small RNA, GlmY, preventing GlmZ degradation and leading to synthesis of GlmS.</text>
</comment>
<comment type="subunit">
    <text evidence="1">Homotrimer.</text>
</comment>
<comment type="similarity">
    <text evidence="1">Belongs to the RapZ-like family. RapZ subfamily.</text>
</comment>
<dbReference type="EMBL" id="AM933173">
    <property type="protein sequence ID" value="CAR39011.1"/>
    <property type="molecule type" value="Genomic_DNA"/>
</dbReference>
<dbReference type="RefSeq" id="WP_000243749.1">
    <property type="nucleotide sequence ID" value="NC_011274.1"/>
</dbReference>
<dbReference type="SMR" id="B5RES1"/>
<dbReference type="KEGG" id="seg:SG3213"/>
<dbReference type="HOGENOM" id="CLU_059558_1_1_6"/>
<dbReference type="Proteomes" id="UP000008321">
    <property type="component" value="Chromosome"/>
</dbReference>
<dbReference type="GO" id="GO:0005524">
    <property type="term" value="F:ATP binding"/>
    <property type="evidence" value="ECO:0007669"/>
    <property type="project" value="UniProtKB-UniRule"/>
</dbReference>
<dbReference type="GO" id="GO:0005525">
    <property type="term" value="F:GTP binding"/>
    <property type="evidence" value="ECO:0007669"/>
    <property type="project" value="UniProtKB-UniRule"/>
</dbReference>
<dbReference type="GO" id="GO:0003723">
    <property type="term" value="F:RNA binding"/>
    <property type="evidence" value="ECO:0007669"/>
    <property type="project" value="UniProtKB-KW"/>
</dbReference>
<dbReference type="Gene3D" id="3.40.50.300">
    <property type="entry name" value="P-loop containing nucleotide triphosphate hydrolases"/>
    <property type="match status" value="1"/>
</dbReference>
<dbReference type="HAMAP" id="MF_00636">
    <property type="entry name" value="RapZ_like"/>
    <property type="match status" value="1"/>
</dbReference>
<dbReference type="InterPro" id="IPR027417">
    <property type="entry name" value="P-loop_NTPase"/>
</dbReference>
<dbReference type="InterPro" id="IPR005337">
    <property type="entry name" value="RapZ-like"/>
</dbReference>
<dbReference type="InterPro" id="IPR053930">
    <property type="entry name" value="RapZ-like_N"/>
</dbReference>
<dbReference type="InterPro" id="IPR053931">
    <property type="entry name" value="RapZ_C"/>
</dbReference>
<dbReference type="NCBIfam" id="NF003828">
    <property type="entry name" value="PRK05416.1"/>
    <property type="match status" value="1"/>
</dbReference>
<dbReference type="PANTHER" id="PTHR30448">
    <property type="entry name" value="RNASE ADAPTER PROTEIN RAPZ"/>
    <property type="match status" value="1"/>
</dbReference>
<dbReference type="PANTHER" id="PTHR30448:SF0">
    <property type="entry name" value="RNASE ADAPTER PROTEIN RAPZ"/>
    <property type="match status" value="1"/>
</dbReference>
<dbReference type="Pfam" id="PF22740">
    <property type="entry name" value="PapZ_C"/>
    <property type="match status" value="1"/>
</dbReference>
<dbReference type="Pfam" id="PF03668">
    <property type="entry name" value="RapZ-like_N"/>
    <property type="match status" value="1"/>
</dbReference>
<dbReference type="PIRSF" id="PIRSF005052">
    <property type="entry name" value="P-loopkin"/>
    <property type="match status" value="1"/>
</dbReference>
<dbReference type="SUPFAM" id="SSF52540">
    <property type="entry name" value="P-loop containing nucleoside triphosphate hydrolases"/>
    <property type="match status" value="1"/>
</dbReference>